<proteinExistence type="evidence at transcript level"/>
<reference evidence="5 6" key="1">
    <citation type="journal article" date="2000" name="J. Biol. Chem.">
        <title>Multiplicity, structures, and endocrine and exocrine natures of eel fucose-binding lectins.</title>
        <authorList>
            <person name="Honda S."/>
            <person name="Kashiwagi M."/>
            <person name="Miyamoto K."/>
            <person name="Takei Y."/>
            <person name="Hirose S."/>
        </authorList>
    </citation>
    <scope>NUCLEOTIDE SEQUENCE [MRNA]</scope>
    <scope>FUNCTION</scope>
    <scope>SUBCELLULAR LOCATION</scope>
    <scope>TISSUE SPECIFICITY</scope>
    <source>
        <tissue evidence="6">Gill</tissue>
    </source>
</reference>
<accession>Q9I927</accession>
<protein>
    <recommendedName>
        <fullName>Fucolectin-5</fullName>
    </recommendedName>
</protein>
<organism>
    <name type="scientific">Anguilla japonica</name>
    <name type="common">Japanese eel</name>
    <dbReference type="NCBI Taxonomy" id="7937"/>
    <lineage>
        <taxon>Eukaryota</taxon>
        <taxon>Metazoa</taxon>
        <taxon>Chordata</taxon>
        <taxon>Craniata</taxon>
        <taxon>Vertebrata</taxon>
        <taxon>Euteleostomi</taxon>
        <taxon>Actinopterygii</taxon>
        <taxon>Neopterygii</taxon>
        <taxon>Teleostei</taxon>
        <taxon>Anguilliformes</taxon>
        <taxon>Anguillidae</taxon>
        <taxon>Anguilla</taxon>
    </lineage>
</organism>
<name>FUCL5_ANGJA</name>
<keyword id="KW-0106">Calcium</keyword>
<keyword id="KW-1015">Disulfide bond</keyword>
<keyword id="KW-0430">Lectin</keyword>
<keyword id="KW-0479">Metal-binding</keyword>
<keyword id="KW-0964">Secreted</keyword>
<keyword id="KW-0732">Signal</keyword>
<comment type="function">
    <text evidence="4">Acts as a defensive agent. Recognizes blood group fucosylated oligosaccharides including A, B, H and Lewis B-type antigens. Does not recognize Lewis A antigen and has low affinity for monovalent haptens.</text>
</comment>
<comment type="subunit">
    <text evidence="2">Homotrimer.</text>
</comment>
<comment type="subcellular location">
    <subcellularLocation>
        <location evidence="4">Secreted</location>
    </subcellularLocation>
</comment>
<comment type="tissue specificity">
    <text evidence="4">Gill mucous cells.</text>
</comment>
<comment type="miscellaneous">
    <text evidence="1">Binds 1 calcium ion per monomer.</text>
</comment>
<comment type="similarity">
    <text evidence="5">Belongs to the fucolectin family.</text>
</comment>
<feature type="signal peptide" evidence="3">
    <location>
        <begin position="1"/>
        <end position="31"/>
    </location>
</feature>
<feature type="chain" id="PRO_0000223936" description="Fucolectin-5" evidence="5">
    <location>
        <begin position="32"/>
        <end position="189"/>
    </location>
</feature>
<feature type="region of interest" description="F5/8 type C-like">
    <location>
        <begin position="40"/>
        <end position="189"/>
    </location>
</feature>
<feature type="short sequence motif" description="Cell attachment site" evidence="3">
    <location>
        <begin position="111"/>
        <end position="113"/>
    </location>
</feature>
<feature type="binding site" evidence="2">
    <location>
        <position position="70"/>
    </location>
    <ligand>
        <name>Ca(2+)</name>
        <dbReference type="ChEBI" id="CHEBI:29108"/>
    </ligand>
</feature>
<feature type="binding site" evidence="1">
    <location>
        <position position="72"/>
    </location>
    <ligand>
        <name>Ca(2+)</name>
        <dbReference type="ChEBI" id="CHEBI:29108"/>
    </ligand>
</feature>
<feature type="binding site" evidence="2">
    <location>
        <position position="81"/>
    </location>
    <ligand>
        <name>Ca(2+)</name>
        <dbReference type="ChEBI" id="CHEBI:29108"/>
    </ligand>
</feature>
<feature type="binding site" evidence="2">
    <location>
        <position position="84"/>
    </location>
    <ligand>
        <name>alpha-L-fucose</name>
        <dbReference type="ChEBI" id="CHEBI:42548"/>
    </ligand>
</feature>
<feature type="binding site" evidence="2">
    <location>
        <position position="111"/>
    </location>
    <ligand>
        <name>alpha-L-fucose</name>
        <dbReference type="ChEBI" id="CHEBI:42548"/>
    </ligand>
</feature>
<feature type="binding site" evidence="2">
    <location>
        <position position="118"/>
    </location>
    <ligand>
        <name>alpha-L-fucose</name>
        <dbReference type="ChEBI" id="CHEBI:42548"/>
    </ligand>
</feature>
<feature type="binding site" evidence="1">
    <location>
        <position position="178"/>
    </location>
    <ligand>
        <name>Ca(2+)</name>
        <dbReference type="ChEBI" id="CHEBI:29108"/>
    </ligand>
</feature>
<feature type="binding site" evidence="2">
    <location>
        <position position="179"/>
    </location>
    <ligand>
        <name>Ca(2+)</name>
        <dbReference type="ChEBI" id="CHEBI:29108"/>
    </ligand>
</feature>
<feature type="disulfide bond" evidence="2">
    <location>
        <begin position="82"/>
        <end position="178"/>
    </location>
</feature>
<feature type="disulfide bond" evidence="2">
    <location>
        <begin position="114"/>
        <end position="115"/>
    </location>
</feature>
<feature type="disulfide bond" evidence="2">
    <location>
        <begin position="140"/>
        <end position="156"/>
    </location>
</feature>
<sequence>MKTCNLTDRMKVKMIMLLFQILAISTLQSDSAYIPDRYTQENVAVRGKATQSALASGGGAVLSLPGYAIDGNRDSDSSHGSCSHTTNGPNPWWRVDLLQVYTIASVTITNRGDCCGERITGAHILIGNSLENNGINNPQCSTVGIMTAGETRTFHCSRPMIGRYVTVYLPKTEYLQLCEVEVNALLPAN</sequence>
<evidence type="ECO:0000250" key="1"/>
<evidence type="ECO:0000250" key="2">
    <source>
        <dbReference type="UniProtKB" id="Q7SIC1"/>
    </source>
</evidence>
<evidence type="ECO:0000255" key="3"/>
<evidence type="ECO:0000269" key="4">
    <source>
    </source>
</evidence>
<evidence type="ECO:0000305" key="5"/>
<evidence type="ECO:0000312" key="6">
    <source>
        <dbReference type="EMBL" id="BAB03527.1"/>
    </source>
</evidence>
<dbReference type="EMBL" id="AB037871">
    <property type="protein sequence ID" value="BAB03527.1"/>
    <property type="molecule type" value="mRNA"/>
</dbReference>
<dbReference type="SMR" id="Q9I927"/>
<dbReference type="CAZy" id="CBM47">
    <property type="family name" value="Carbohydrate-Binding Module Family 47"/>
</dbReference>
<dbReference type="GO" id="GO:0005615">
    <property type="term" value="C:extracellular space"/>
    <property type="evidence" value="ECO:0000314"/>
    <property type="project" value="UniProtKB"/>
</dbReference>
<dbReference type="GO" id="GO:0005509">
    <property type="term" value="F:calcium ion binding"/>
    <property type="evidence" value="ECO:0000250"/>
    <property type="project" value="UniProtKB"/>
</dbReference>
<dbReference type="GO" id="GO:0030246">
    <property type="term" value="F:carbohydrate binding"/>
    <property type="evidence" value="ECO:0000314"/>
    <property type="project" value="UniProtKB"/>
</dbReference>
<dbReference type="GO" id="GO:0042806">
    <property type="term" value="F:fucose binding"/>
    <property type="evidence" value="ECO:0000314"/>
    <property type="project" value="UniProtKB"/>
</dbReference>
<dbReference type="GO" id="GO:0010185">
    <property type="term" value="P:regulation of cellular defense response"/>
    <property type="evidence" value="ECO:0000304"/>
    <property type="project" value="UniProtKB"/>
</dbReference>
<dbReference type="GO" id="GO:0001868">
    <property type="term" value="P:regulation of complement activation, lectin pathway"/>
    <property type="evidence" value="ECO:0000304"/>
    <property type="project" value="UniProtKB"/>
</dbReference>
<dbReference type="GO" id="GO:0045088">
    <property type="term" value="P:regulation of innate immune response"/>
    <property type="evidence" value="ECO:0000304"/>
    <property type="project" value="UniProtKB"/>
</dbReference>
<dbReference type="Gene3D" id="2.60.120.260">
    <property type="entry name" value="Galactose-binding domain-like"/>
    <property type="match status" value="1"/>
</dbReference>
<dbReference type="InterPro" id="IPR051941">
    <property type="entry name" value="BG_Antigen-Binding_Lectin"/>
</dbReference>
<dbReference type="InterPro" id="IPR006585">
    <property type="entry name" value="FTP1"/>
</dbReference>
<dbReference type="InterPro" id="IPR008979">
    <property type="entry name" value="Galactose-bd-like_sf"/>
</dbReference>
<dbReference type="PANTHER" id="PTHR45713">
    <property type="entry name" value="FTP DOMAIN-CONTAINING PROTEIN"/>
    <property type="match status" value="1"/>
</dbReference>
<dbReference type="PANTHER" id="PTHR45713:SF8">
    <property type="entry name" value="SI:CH211-215K15.4"/>
    <property type="match status" value="1"/>
</dbReference>
<dbReference type="Pfam" id="PF22633">
    <property type="entry name" value="F5_F8_type_C_2"/>
    <property type="match status" value="1"/>
</dbReference>
<dbReference type="SMART" id="SM00607">
    <property type="entry name" value="FTP"/>
    <property type="match status" value="1"/>
</dbReference>
<dbReference type="SUPFAM" id="SSF49785">
    <property type="entry name" value="Galactose-binding domain-like"/>
    <property type="match status" value="1"/>
</dbReference>